<comment type="function">
    <text>Involved in gametogenesis and steroidogenesis.</text>
</comment>
<comment type="subunit">
    <text>Heterodimer of an alpha and a beta chain.</text>
</comment>
<comment type="subcellular location">
    <subcellularLocation>
        <location>Secreted</location>
    </subcellularLocation>
</comment>
<comment type="similarity">
    <text evidence="3">Belongs to the glycoprotein hormones subunit alpha family.</text>
</comment>
<feature type="signal peptide" evidence="2">
    <location>
        <begin position="1"/>
        <end position="23"/>
    </location>
</feature>
<feature type="chain" id="PRO_0000011665" description="Glycoprotein hormones alpha chain 1">
    <location>
        <begin position="24"/>
        <end position="118"/>
    </location>
</feature>
<feature type="glycosylation site" description="N-linked (GlcNAc...) asparagine" evidence="3">
    <location>
        <position position="79"/>
    </location>
</feature>
<feature type="glycosylation site" description="N-linked (GlcNAc...) asparagine" evidence="3">
    <location>
        <position position="104"/>
    </location>
</feature>
<feature type="disulfide bond" evidence="1">
    <location>
        <begin position="34"/>
        <end position="58"/>
    </location>
</feature>
<feature type="disulfide bond" evidence="1">
    <location>
        <begin position="37"/>
        <end position="87"/>
    </location>
</feature>
<feature type="disulfide bond" evidence="1">
    <location>
        <begin position="55"/>
        <end position="108"/>
    </location>
</feature>
<feature type="disulfide bond" evidence="1">
    <location>
        <begin position="59"/>
        <end position="110"/>
    </location>
</feature>
<feature type="disulfide bond" evidence="1">
    <location>
        <begin position="86"/>
        <end position="113"/>
    </location>
</feature>
<protein>
    <recommendedName>
        <fullName>Glycoprotein hormones alpha chain 1</fullName>
    </recommendedName>
    <alternativeName>
        <fullName>GTH-alpha</fullName>
    </alternativeName>
    <alternativeName>
        <fullName>Gonadotropin alpha chain 1</fullName>
    </alternativeName>
</protein>
<dbReference type="EMBL" id="M37379">
    <property type="protein sequence ID" value="AAA49209.1"/>
    <property type="molecule type" value="mRNA"/>
</dbReference>
<dbReference type="EMBL" id="X56497">
    <property type="protein sequence ID" value="CAA39852.1"/>
    <property type="molecule type" value="Genomic_DNA"/>
</dbReference>
<dbReference type="PIR" id="S20607">
    <property type="entry name" value="UTCAA"/>
</dbReference>
<dbReference type="SMR" id="P01221"/>
<dbReference type="GlyCosmos" id="P01221">
    <property type="glycosylation" value="2 sites, No reported glycans"/>
</dbReference>
<dbReference type="Ensembl" id="ENSCCRT00015084486.1">
    <property type="protein sequence ID" value="ENSCCRP00015081810.1"/>
    <property type="gene ID" value="ENSCCRG00015033087.1"/>
</dbReference>
<dbReference type="GeneID" id="109081150"/>
<dbReference type="KEGG" id="ccar:109081150"/>
<dbReference type="CTD" id="1081"/>
<dbReference type="OrthoDB" id="9852859at2759"/>
<dbReference type="Proteomes" id="UP000694384">
    <property type="component" value="Unplaced"/>
</dbReference>
<dbReference type="Proteomes" id="UP000694427">
    <property type="component" value="Unplaced"/>
</dbReference>
<dbReference type="Proteomes" id="UP000694700">
    <property type="component" value="Unplaced"/>
</dbReference>
<dbReference type="Proteomes" id="UP000694701">
    <property type="component" value="Unplaced"/>
</dbReference>
<dbReference type="Proteomes" id="UP001155660">
    <property type="component" value="Chromosome B17"/>
</dbReference>
<dbReference type="GO" id="GO:0005615">
    <property type="term" value="C:extracellular space"/>
    <property type="evidence" value="ECO:0007669"/>
    <property type="project" value="TreeGrafter"/>
</dbReference>
<dbReference type="GO" id="GO:0016914">
    <property type="term" value="C:follicle-stimulating hormone complex"/>
    <property type="evidence" value="ECO:0007669"/>
    <property type="project" value="TreeGrafter"/>
</dbReference>
<dbReference type="GO" id="GO:0016913">
    <property type="term" value="F:follicle-stimulating hormone activity"/>
    <property type="evidence" value="ECO:0007669"/>
    <property type="project" value="TreeGrafter"/>
</dbReference>
<dbReference type="GO" id="GO:0046982">
    <property type="term" value="F:protein heterodimerization activity"/>
    <property type="evidence" value="ECO:0000250"/>
    <property type="project" value="UniProtKB"/>
</dbReference>
<dbReference type="GO" id="GO:0010893">
    <property type="term" value="P:positive regulation of steroid biosynthetic process"/>
    <property type="evidence" value="ECO:0007669"/>
    <property type="project" value="TreeGrafter"/>
</dbReference>
<dbReference type="GO" id="GO:0006590">
    <property type="term" value="P:thyroid hormone generation"/>
    <property type="evidence" value="ECO:0007669"/>
    <property type="project" value="TreeGrafter"/>
</dbReference>
<dbReference type="FunFam" id="2.10.90.10:FF:000011">
    <property type="entry name" value="Glycoprotein hormones alpha chain"/>
    <property type="match status" value="1"/>
</dbReference>
<dbReference type="Gene3D" id="2.10.90.10">
    <property type="entry name" value="Cystine-knot cytokines"/>
    <property type="match status" value="1"/>
</dbReference>
<dbReference type="InterPro" id="IPR029034">
    <property type="entry name" value="Cystine-knot_cytokine"/>
</dbReference>
<dbReference type="InterPro" id="IPR000476">
    <property type="entry name" value="Glyco_hormone"/>
</dbReference>
<dbReference type="PANTHER" id="PTHR11509">
    <property type="entry name" value="GLYCOPROTEIN HORMONE ALPHA CHAIN"/>
    <property type="match status" value="1"/>
</dbReference>
<dbReference type="PANTHER" id="PTHR11509:SF0">
    <property type="entry name" value="GLYCOPROTEIN HORMONES ALPHA CHAIN"/>
    <property type="match status" value="1"/>
</dbReference>
<dbReference type="Pfam" id="PF00236">
    <property type="entry name" value="Hormone_6"/>
    <property type="match status" value="1"/>
</dbReference>
<dbReference type="PRINTS" id="PR00274">
    <property type="entry name" value="GLYCOHORMONE"/>
</dbReference>
<dbReference type="SMART" id="SM00067">
    <property type="entry name" value="GHA"/>
    <property type="match status" value="1"/>
</dbReference>
<dbReference type="SUPFAM" id="SSF57501">
    <property type="entry name" value="Cystine-knot cytokines"/>
    <property type="match status" value="1"/>
</dbReference>
<dbReference type="PROSITE" id="PS00779">
    <property type="entry name" value="GLYCO_HORMONE_ALPHA_1"/>
    <property type="match status" value="1"/>
</dbReference>
<dbReference type="PROSITE" id="PS00780">
    <property type="entry name" value="GLYCO_HORMONE_ALPHA_2"/>
    <property type="match status" value="1"/>
</dbReference>
<dbReference type="PROSITE" id="PS50277">
    <property type="entry name" value="GLYCO_HORMONE_ALPHA_3"/>
    <property type="match status" value="1"/>
</dbReference>
<accession>P01221</accession>
<reference key="1">
    <citation type="journal article" date="1988" name="Int. J. Pept. Protein Res.">
        <title>Primary structures of carp gonadotropin subunits deduced from cDNA nucleotide sequences.</title>
        <authorList>
            <person name="Chang Y.S."/>
            <person name="Huang C.-J."/>
            <person name="Huang F.-L."/>
            <person name="Lo T.-B."/>
        </authorList>
    </citation>
    <scope>NUCLEOTIDE SEQUENCE</scope>
</reference>
<reference key="2">
    <citation type="journal article" date="1992" name="Biochim. Biophys. Acta">
        <title>Organization and nucleotide sequence of carp gonadotropin alpha subunit genes.</title>
        <authorList>
            <person name="Huang C.J."/>
            <person name="Huang F.-L."/>
            <person name="Wang Y.C."/>
            <person name="Chang Y.S."/>
            <person name="Lo T.-B."/>
        </authorList>
    </citation>
    <scope>NUCLEOTIDE SEQUENCE</scope>
</reference>
<reference key="3">
    <citation type="journal article" date="1977" name="Biochimie">
        <title>The evolution of gonadotropins: some molecular data concerning a non-mammalian pituitary gonadotropin, the hormone from a teleost fish (Cyprinus carpio L.).</title>
        <authorList>
            <person name="Jolles J."/>
            <person name="Burzawa-Gerard E."/>
            <person name="Fontaine Y.-A."/>
            <person name="Jolles P."/>
        </authorList>
    </citation>
    <scope>PROTEIN SEQUENCE OF 24-56 AND 114-118</scope>
</reference>
<name>GLHA1_CYPCA</name>
<sequence>MFWTRYAGASILLFFMLIRLGQLYPRNDMNNFGCEECKLKENNIFSKPGAPVYQCMGCCFSRAYPTPLRSKKTMLVPKNITSEATCCVAKEVKRVLVNDVKLVNHTDCHCSTCYYHKS</sequence>
<organism>
    <name type="scientific">Cyprinus carpio</name>
    <name type="common">Common carp</name>
    <dbReference type="NCBI Taxonomy" id="7962"/>
    <lineage>
        <taxon>Eukaryota</taxon>
        <taxon>Metazoa</taxon>
        <taxon>Chordata</taxon>
        <taxon>Craniata</taxon>
        <taxon>Vertebrata</taxon>
        <taxon>Euteleostomi</taxon>
        <taxon>Actinopterygii</taxon>
        <taxon>Neopterygii</taxon>
        <taxon>Teleostei</taxon>
        <taxon>Ostariophysi</taxon>
        <taxon>Cypriniformes</taxon>
        <taxon>Cyprinidae</taxon>
        <taxon>Cyprininae</taxon>
        <taxon>Cyprinus</taxon>
    </lineage>
</organism>
<proteinExistence type="evidence at protein level"/>
<gene>
    <name type="primary">cgaa</name>
</gene>
<keyword id="KW-0903">Direct protein sequencing</keyword>
<keyword id="KW-1015">Disulfide bond</keyword>
<keyword id="KW-0325">Glycoprotein</keyword>
<keyword id="KW-0372">Hormone</keyword>
<keyword id="KW-1185">Reference proteome</keyword>
<keyword id="KW-0964">Secreted</keyword>
<keyword id="KW-0732">Signal</keyword>
<evidence type="ECO:0000250" key="1"/>
<evidence type="ECO:0000269" key="2">
    <source>
    </source>
</evidence>
<evidence type="ECO:0000305" key="3"/>